<organism>
    <name type="scientific">Salmonella schwarzengrund (strain CVM19633)</name>
    <dbReference type="NCBI Taxonomy" id="439843"/>
    <lineage>
        <taxon>Bacteria</taxon>
        <taxon>Pseudomonadati</taxon>
        <taxon>Pseudomonadota</taxon>
        <taxon>Gammaproteobacteria</taxon>
        <taxon>Enterobacterales</taxon>
        <taxon>Enterobacteriaceae</taxon>
        <taxon>Salmonella</taxon>
    </lineage>
</organism>
<keyword id="KW-0456">Lyase</keyword>
<keyword id="KW-0663">Pyridoxal phosphate</keyword>
<feature type="chain" id="PRO_1000136172" description="D-cysteine desulfhydrase">
    <location>
        <begin position="1"/>
        <end position="328"/>
    </location>
</feature>
<feature type="modified residue" description="N6-(pyridoxal phosphate)lysine" evidence="1">
    <location>
        <position position="51"/>
    </location>
</feature>
<evidence type="ECO:0000255" key="1">
    <source>
        <dbReference type="HAMAP-Rule" id="MF_01045"/>
    </source>
</evidence>
<name>DCYD_SALSV</name>
<dbReference type="EC" id="4.4.1.15" evidence="1"/>
<dbReference type="EMBL" id="CP001127">
    <property type="protein sequence ID" value="ACF90801.1"/>
    <property type="molecule type" value="Genomic_DNA"/>
</dbReference>
<dbReference type="RefSeq" id="WP_001128187.1">
    <property type="nucleotide sequence ID" value="NC_011094.1"/>
</dbReference>
<dbReference type="SMR" id="B4TYX4"/>
<dbReference type="KEGG" id="sew:SeSA_A2109"/>
<dbReference type="HOGENOM" id="CLU_048897_1_0_6"/>
<dbReference type="Proteomes" id="UP000001865">
    <property type="component" value="Chromosome"/>
</dbReference>
<dbReference type="GO" id="GO:0019148">
    <property type="term" value="F:D-cysteine desulfhydrase activity"/>
    <property type="evidence" value="ECO:0007669"/>
    <property type="project" value="UniProtKB-UniRule"/>
</dbReference>
<dbReference type="GO" id="GO:0046416">
    <property type="term" value="P:D-amino acid metabolic process"/>
    <property type="evidence" value="ECO:0007669"/>
    <property type="project" value="UniProtKB-UniRule"/>
</dbReference>
<dbReference type="CDD" id="cd06449">
    <property type="entry name" value="ACCD"/>
    <property type="match status" value="1"/>
</dbReference>
<dbReference type="FunFam" id="3.40.50.1100:FF:000019">
    <property type="entry name" value="D-cysteine desulfhydrase"/>
    <property type="match status" value="1"/>
</dbReference>
<dbReference type="Gene3D" id="3.40.50.1100">
    <property type="match status" value="2"/>
</dbReference>
<dbReference type="HAMAP" id="MF_01045">
    <property type="entry name" value="D_Cys_desulfhydr"/>
    <property type="match status" value="1"/>
</dbReference>
<dbReference type="InterPro" id="IPR027278">
    <property type="entry name" value="ACCD_DCysDesulf"/>
</dbReference>
<dbReference type="InterPro" id="IPR005966">
    <property type="entry name" value="D-Cys_desShydrase"/>
</dbReference>
<dbReference type="InterPro" id="IPR023702">
    <property type="entry name" value="D_Cys_desulphydr_bac"/>
</dbReference>
<dbReference type="InterPro" id="IPR001926">
    <property type="entry name" value="TrpB-like_PALP"/>
</dbReference>
<dbReference type="InterPro" id="IPR036052">
    <property type="entry name" value="TrpB-like_PALP_sf"/>
</dbReference>
<dbReference type="NCBIfam" id="TIGR01275">
    <property type="entry name" value="ACC_deam_rel"/>
    <property type="match status" value="1"/>
</dbReference>
<dbReference type="NCBIfam" id="NF003029">
    <property type="entry name" value="PRK03910.1-1"/>
    <property type="match status" value="1"/>
</dbReference>
<dbReference type="NCBIfam" id="NF003030">
    <property type="entry name" value="PRK03910.1-3"/>
    <property type="match status" value="1"/>
</dbReference>
<dbReference type="NCBIfam" id="NF003032">
    <property type="entry name" value="PRK03910.1-5"/>
    <property type="match status" value="1"/>
</dbReference>
<dbReference type="PANTHER" id="PTHR43780">
    <property type="entry name" value="1-AMINOCYCLOPROPANE-1-CARBOXYLATE DEAMINASE-RELATED"/>
    <property type="match status" value="1"/>
</dbReference>
<dbReference type="PANTHER" id="PTHR43780:SF2">
    <property type="entry name" value="1-AMINOCYCLOPROPANE-1-CARBOXYLATE DEAMINASE-RELATED"/>
    <property type="match status" value="1"/>
</dbReference>
<dbReference type="Pfam" id="PF00291">
    <property type="entry name" value="PALP"/>
    <property type="match status" value="1"/>
</dbReference>
<dbReference type="PIRSF" id="PIRSF006278">
    <property type="entry name" value="ACCD_DCysDesulf"/>
    <property type="match status" value="1"/>
</dbReference>
<dbReference type="SUPFAM" id="SSF53686">
    <property type="entry name" value="Tryptophan synthase beta subunit-like PLP-dependent enzymes"/>
    <property type="match status" value="1"/>
</dbReference>
<gene>
    <name evidence="1" type="primary">dcyD</name>
    <name type="ordered locus">SeSA_A2109</name>
</gene>
<comment type="function">
    <text evidence="1">Catalyzes the alpha,beta-elimination reaction of D-cysteine and of several D-cysteine derivatives. It could be a defense mechanism against D-cysteine.</text>
</comment>
<comment type="catalytic activity">
    <reaction evidence="1">
        <text>D-cysteine + H2O = hydrogen sulfide + pyruvate + NH4(+) + H(+)</text>
        <dbReference type="Rhea" id="RHEA:11268"/>
        <dbReference type="ChEBI" id="CHEBI:15361"/>
        <dbReference type="ChEBI" id="CHEBI:15377"/>
        <dbReference type="ChEBI" id="CHEBI:15378"/>
        <dbReference type="ChEBI" id="CHEBI:28938"/>
        <dbReference type="ChEBI" id="CHEBI:29919"/>
        <dbReference type="ChEBI" id="CHEBI:35236"/>
        <dbReference type="EC" id="4.4.1.15"/>
    </reaction>
</comment>
<comment type="cofactor">
    <cofactor evidence="1">
        <name>pyridoxal 5'-phosphate</name>
        <dbReference type="ChEBI" id="CHEBI:597326"/>
    </cofactor>
</comment>
<comment type="subunit">
    <text evidence="1">Homodimer.</text>
</comment>
<comment type="similarity">
    <text evidence="1">Belongs to the ACC deaminase/D-cysteine desulfhydrase family.</text>
</comment>
<protein>
    <recommendedName>
        <fullName evidence="1">D-cysteine desulfhydrase</fullName>
        <ecNumber evidence="1">4.4.1.15</ecNumber>
    </recommendedName>
</protein>
<proteinExistence type="inferred from homology"/>
<accession>B4TYX4</accession>
<sequence>MPLHHLTRFPRLELIGAPTPLEYLPRLSDYLGREIYIKRDDVTPIAMGGNKLRKLEFLVADALREGADTLITAGAIQSNHVRQTAAVAAKLGLHCVALLENPIGTTAENYLTNGNRLLLDLFNTQIEMCDALTDPDAQLQTLATRIEAQGFRPYVIPVGGSSALGAMGYVESALEIAQQCEEVVGLSSVVVASGSAGTHAGLAVGLEHLMPDVELIGVTVSRAVAEQKPKVIALQQAIAGQLALTATADIHLWDDYFAPGYGVPNDAGMEAVKLLASLEGVLLDPVYTGKAMAGLIDGISQKRFNDDGPILFIHTGGAPALFAYHPHV</sequence>
<reference key="1">
    <citation type="journal article" date="2011" name="J. Bacteriol.">
        <title>Comparative genomics of 28 Salmonella enterica isolates: evidence for CRISPR-mediated adaptive sublineage evolution.</title>
        <authorList>
            <person name="Fricke W.F."/>
            <person name="Mammel M.K."/>
            <person name="McDermott P.F."/>
            <person name="Tartera C."/>
            <person name="White D.G."/>
            <person name="Leclerc J.E."/>
            <person name="Ravel J."/>
            <person name="Cebula T.A."/>
        </authorList>
    </citation>
    <scope>NUCLEOTIDE SEQUENCE [LARGE SCALE GENOMIC DNA]</scope>
    <source>
        <strain>CVM19633</strain>
    </source>
</reference>